<geneLocation type="chloroplast"/>
<name>MATK_GALEW</name>
<proteinExistence type="inferred from homology"/>
<comment type="function">
    <text evidence="1">Usually encoded in the trnK tRNA gene intron. Probably assists in splicing its own and other chloroplast group II introns.</text>
</comment>
<comment type="subcellular location">
    <subcellularLocation>
        <location>Plastid</location>
        <location>Chloroplast</location>
    </subcellularLocation>
</comment>
<comment type="similarity">
    <text evidence="1">Belongs to the intron maturase 2 family. MatK subfamily.</text>
</comment>
<gene>
    <name evidence="1" type="primary">matK</name>
</gene>
<sequence length="520" mass="62621">MEELQGYLEKDRSRQQHFLYPLLFQEYIYALAHDYGLNGSIFYESAEVFGYDNKSSLALVKRLITRIYQQKSLIYLVNDSKQNRFVGHTHNNFFYSRFYSQMISESFSIIVEIPFSLRLVSYLKEKEIPKYHNLRSIHSIFPFLEDKLSHLNYVSAILIPHPIHMEILVQILQCWIQDVPFLHLLRFFLHEYHNWNSFLITQKKSIFVFSKEKKRLFRFIYNFYVFECEFLFVFIRKQSSYLRLTFFGTFFERTHFYGKIEHLQIEKLIVICRNDFHRTFWFFKDPFMHYVRYQGKAILASKGTHLLMTKWKYHFVNFWQYYFNFWSQPYRIQINQLSNYSFYFLGYLSSLLINSSAVRNQMLENSFIIDTLTKKFDTIVPVILLIGSLSKAKFCTISGHPISKPIWANLSDSDILDRFGRICRNLFHYHSGSSKKQGLYRIKYILRLSCARTLARKHKSTVRTFLRRLGSGLLEEFFTEEEEVLSLMFPKTTSFTLHGSHRERIWFLDIIRINELVNRS</sequence>
<dbReference type="EMBL" id="AY101329">
    <property type="protein sequence ID" value="AAO11713.1"/>
    <property type="molecule type" value="Genomic_DNA"/>
</dbReference>
<dbReference type="GO" id="GO:0009507">
    <property type="term" value="C:chloroplast"/>
    <property type="evidence" value="ECO:0007669"/>
    <property type="project" value="UniProtKB-SubCell"/>
</dbReference>
<dbReference type="GO" id="GO:0003723">
    <property type="term" value="F:RNA binding"/>
    <property type="evidence" value="ECO:0007669"/>
    <property type="project" value="UniProtKB-KW"/>
</dbReference>
<dbReference type="GO" id="GO:0006397">
    <property type="term" value="P:mRNA processing"/>
    <property type="evidence" value="ECO:0007669"/>
    <property type="project" value="UniProtKB-KW"/>
</dbReference>
<dbReference type="GO" id="GO:0008380">
    <property type="term" value="P:RNA splicing"/>
    <property type="evidence" value="ECO:0007669"/>
    <property type="project" value="UniProtKB-UniRule"/>
</dbReference>
<dbReference type="GO" id="GO:0008033">
    <property type="term" value="P:tRNA processing"/>
    <property type="evidence" value="ECO:0007669"/>
    <property type="project" value="UniProtKB-KW"/>
</dbReference>
<dbReference type="HAMAP" id="MF_01390">
    <property type="entry name" value="MatK"/>
    <property type="match status" value="1"/>
</dbReference>
<dbReference type="InterPro" id="IPR024937">
    <property type="entry name" value="Domain_X"/>
</dbReference>
<dbReference type="InterPro" id="IPR002866">
    <property type="entry name" value="Maturase_MatK"/>
</dbReference>
<dbReference type="InterPro" id="IPR024942">
    <property type="entry name" value="Maturase_MatK_N"/>
</dbReference>
<dbReference type="PANTHER" id="PTHR34811">
    <property type="entry name" value="MATURASE K"/>
    <property type="match status" value="1"/>
</dbReference>
<dbReference type="PANTHER" id="PTHR34811:SF1">
    <property type="entry name" value="MATURASE K"/>
    <property type="match status" value="1"/>
</dbReference>
<dbReference type="Pfam" id="PF01348">
    <property type="entry name" value="Intron_maturas2"/>
    <property type="match status" value="1"/>
</dbReference>
<dbReference type="Pfam" id="PF01824">
    <property type="entry name" value="MatK_N"/>
    <property type="match status" value="1"/>
</dbReference>
<reference key="1">
    <citation type="journal article" date="2004" name="Plant Syst. Evol.">
        <title>Phylogenetic analysis of Leucojum and Galanthus (Amaryllidaceae) based on plastid matK and nuclear ribosomal spacer (ITS) DNA sequences and morphology.</title>
        <authorList>
            <person name="Lledo D.M."/>
            <person name="Davis A.P."/>
            <person name="Crespo M.B."/>
            <person name="Chase M.W."/>
            <person name="Fay M.F."/>
        </authorList>
    </citation>
    <scope>NUCLEOTIDE SEQUENCE [GENOMIC DNA]</scope>
</reference>
<organism>
    <name type="scientific">Galanthus elwesii</name>
    <name type="common">Giant snowdrop</name>
    <dbReference type="NCBI Taxonomy" id="82232"/>
    <lineage>
        <taxon>Eukaryota</taxon>
        <taxon>Viridiplantae</taxon>
        <taxon>Streptophyta</taxon>
        <taxon>Embryophyta</taxon>
        <taxon>Tracheophyta</taxon>
        <taxon>Spermatophyta</taxon>
        <taxon>Magnoliopsida</taxon>
        <taxon>Liliopsida</taxon>
        <taxon>Asparagales</taxon>
        <taxon>Amaryllidaceae</taxon>
        <taxon>Amaryllidoideae</taxon>
        <taxon>Galanthus</taxon>
    </lineage>
</organism>
<keyword id="KW-0150">Chloroplast</keyword>
<keyword id="KW-0507">mRNA processing</keyword>
<keyword id="KW-0934">Plastid</keyword>
<keyword id="KW-0694">RNA-binding</keyword>
<keyword id="KW-0819">tRNA processing</keyword>
<protein>
    <recommendedName>
        <fullName evidence="1">Maturase K</fullName>
    </recommendedName>
    <alternativeName>
        <fullName evidence="1">Intron maturase</fullName>
    </alternativeName>
</protein>
<evidence type="ECO:0000255" key="1">
    <source>
        <dbReference type="HAMAP-Rule" id="MF_01390"/>
    </source>
</evidence>
<accession>Q8GVA0</accession>
<feature type="chain" id="PRO_0000143394" description="Maturase K">
    <location>
        <begin position="1"/>
        <end position="520"/>
    </location>
</feature>